<accession>O54161</accession>
<proteinExistence type="evidence at protein level"/>
<gene>
    <name type="primary">abfB</name>
    <name type="ordered locus">SCO5932</name>
    <name type="ORF">SC7H1.02</name>
</gene>
<organism>
    <name type="scientific">Streptomyces coelicolor (strain ATCC BAA-471 / A3(2) / M145)</name>
    <dbReference type="NCBI Taxonomy" id="100226"/>
    <lineage>
        <taxon>Bacteria</taxon>
        <taxon>Bacillati</taxon>
        <taxon>Actinomycetota</taxon>
        <taxon>Actinomycetes</taxon>
        <taxon>Kitasatosporales</taxon>
        <taxon>Streptomycetaceae</taxon>
        <taxon>Streptomyces</taxon>
        <taxon>Streptomyces albidoflavus group</taxon>
    </lineage>
</organism>
<name>EABF_STRCO</name>
<evidence type="ECO:0000250" key="1"/>
<evidence type="ECO:0000255" key="2"/>
<evidence type="ECO:0000255" key="3">
    <source>
        <dbReference type="PROSITE-ProRule" id="PRU00174"/>
    </source>
</evidence>
<evidence type="ECO:0000305" key="4"/>
<evidence type="ECO:0007829" key="5">
    <source>
        <dbReference type="PDB" id="3WMY"/>
    </source>
</evidence>
<evidence type="ECO:0007829" key="6">
    <source>
        <dbReference type="PDB" id="3WN1"/>
    </source>
</evidence>
<reference key="1">
    <citation type="journal article" date="2002" name="Nature">
        <title>Complete genome sequence of the model actinomycete Streptomyces coelicolor A3(2).</title>
        <authorList>
            <person name="Bentley S.D."/>
            <person name="Chater K.F."/>
            <person name="Cerdeno-Tarraga A.-M."/>
            <person name="Challis G.L."/>
            <person name="Thomson N.R."/>
            <person name="James K.D."/>
            <person name="Harris D.E."/>
            <person name="Quail M.A."/>
            <person name="Kieser H."/>
            <person name="Harper D."/>
            <person name="Bateman A."/>
            <person name="Brown S."/>
            <person name="Chandra G."/>
            <person name="Chen C.W."/>
            <person name="Collins M."/>
            <person name="Cronin A."/>
            <person name="Fraser A."/>
            <person name="Goble A."/>
            <person name="Hidalgo J."/>
            <person name="Hornsby T."/>
            <person name="Howarth S."/>
            <person name="Huang C.-H."/>
            <person name="Kieser T."/>
            <person name="Larke L."/>
            <person name="Murphy L.D."/>
            <person name="Oliver K."/>
            <person name="O'Neil S."/>
            <person name="Rabbinowitsch E."/>
            <person name="Rajandream M.A."/>
            <person name="Rutherford K.M."/>
            <person name="Rutter S."/>
            <person name="Seeger K."/>
            <person name="Saunders D."/>
            <person name="Sharp S."/>
            <person name="Squares R."/>
            <person name="Squares S."/>
            <person name="Taylor K."/>
            <person name="Warren T."/>
            <person name="Wietzorrek A."/>
            <person name="Woodward J.R."/>
            <person name="Barrell B.G."/>
            <person name="Parkhill J."/>
            <person name="Hopwood D.A."/>
        </authorList>
    </citation>
    <scope>NUCLEOTIDE SEQUENCE [LARGE SCALE GENOMIC DNA]</scope>
    <source>
        <strain>ATCC BAA-471 / A3(2) / M145</strain>
    </source>
</reference>
<sequence>MHRGSLSRGHTSAVLAAVVAALAALAALLVATTPAQAAGSGALRGAGSNRCLDVLGGSQDDGALLQLYDCWGGTNQQWTSTDTGRLTVYGDKCLDVPGHATAPGTRVQIWSCSGGANQQWRVNSDGTVVGVESGLCLEAAGAGTANGTAVQLWTCNGGGNQKWTGLTGTPPTDGTCALPSTYRWSSTGVLAQPKSGWVALKDFTTVTHNGRHLVYGSTSSGSSYGSMVFSPFTNWSDMASAGQNAMNQAAVAPTLFYFAPKNIWVLAYQWGSWPFIYRTSSDPTDPNGWSAPQPLFTGSISGSDTGPIDQTLIADGQNMYLFFAGDNGKIYRASMPIGNFPGNFGSSYTTIMSDTKANLFEGVQVYKVQGQNQYLMIVEAMGANGRYFRSFTASSLSGSWTPQAASEGNPFAGKANSGATWTNDISHGDLVRDNPDQTMTVDPCNLQFLYQGKSPNAGGDYNSLPWRPGVLTLRR</sequence>
<feature type="signal peptide" evidence="2">
    <location>
        <begin position="1"/>
        <end position="37"/>
    </location>
</feature>
<feature type="chain" id="PRO_0000008036" description="Extracellular exo-alpha-L-arabinofuranosidase">
    <location>
        <begin position="38"/>
        <end position="475"/>
    </location>
</feature>
<feature type="domain" description="Ricin B-type lectin" evidence="3">
    <location>
        <begin position="39"/>
        <end position="166"/>
    </location>
</feature>
<feature type="strand" evidence="5">
    <location>
        <begin position="184"/>
        <end position="186"/>
    </location>
</feature>
<feature type="strand" evidence="5">
    <location>
        <begin position="198"/>
        <end position="208"/>
    </location>
</feature>
<feature type="strand" evidence="5">
    <location>
        <begin position="211"/>
        <end position="219"/>
    </location>
</feature>
<feature type="strand" evidence="5">
    <location>
        <begin position="224"/>
        <end position="229"/>
    </location>
</feature>
<feature type="strand" evidence="5">
    <location>
        <begin position="232"/>
        <end position="234"/>
    </location>
</feature>
<feature type="helix" evidence="5">
    <location>
        <begin position="235"/>
        <end position="240"/>
    </location>
</feature>
<feature type="strand" evidence="5">
    <location>
        <begin position="243"/>
        <end position="245"/>
    </location>
</feature>
<feature type="strand" evidence="5">
    <location>
        <begin position="251"/>
        <end position="258"/>
    </location>
</feature>
<feature type="helix" evidence="5">
    <location>
        <begin position="259"/>
        <end position="261"/>
    </location>
</feature>
<feature type="strand" evidence="5">
    <location>
        <begin position="263"/>
        <end position="281"/>
    </location>
</feature>
<feature type="strand" evidence="5">
    <location>
        <begin position="293"/>
        <end position="296"/>
    </location>
</feature>
<feature type="strand" evidence="5">
    <location>
        <begin position="307"/>
        <end position="314"/>
    </location>
</feature>
<feature type="strand" evidence="5">
    <location>
        <begin position="316"/>
        <end position="324"/>
    </location>
</feature>
<feature type="strand" evidence="5">
    <location>
        <begin position="326"/>
        <end position="336"/>
    </location>
</feature>
<feature type="helix" evidence="5">
    <location>
        <begin position="337"/>
        <end position="339"/>
    </location>
</feature>
<feature type="strand" evidence="5">
    <location>
        <begin position="349"/>
        <end position="353"/>
    </location>
</feature>
<feature type="turn" evidence="5">
    <location>
        <begin position="356"/>
        <end position="358"/>
    </location>
</feature>
<feature type="strand" evidence="5">
    <location>
        <begin position="361"/>
        <end position="368"/>
    </location>
</feature>
<feature type="turn" evidence="6">
    <location>
        <begin position="369"/>
        <end position="372"/>
    </location>
</feature>
<feature type="strand" evidence="5">
    <location>
        <begin position="374"/>
        <end position="381"/>
    </location>
</feature>
<feature type="strand" evidence="5">
    <location>
        <begin position="383"/>
        <end position="395"/>
    </location>
</feature>
<feature type="strand" evidence="5">
    <location>
        <begin position="401"/>
        <end position="413"/>
    </location>
</feature>
<feature type="turn" evidence="5">
    <location>
        <begin position="414"/>
        <end position="416"/>
    </location>
</feature>
<feature type="strand" evidence="5">
    <location>
        <begin position="426"/>
        <end position="430"/>
    </location>
</feature>
<feature type="strand" evidence="5">
    <location>
        <begin position="432"/>
        <end position="434"/>
    </location>
</feature>
<feature type="helix" evidence="5">
    <location>
        <begin position="443"/>
        <end position="445"/>
    </location>
</feature>
<feature type="strand" evidence="5">
    <location>
        <begin position="447"/>
        <end position="452"/>
    </location>
</feature>
<feature type="helix" evidence="5">
    <location>
        <begin position="461"/>
        <end position="463"/>
    </location>
</feature>
<feature type="strand" evidence="5">
    <location>
        <begin position="467"/>
        <end position="473"/>
    </location>
</feature>
<protein>
    <recommendedName>
        <fullName>Extracellular exo-alpha-L-arabinofuranosidase</fullName>
        <shortName>ABF</shortName>
        <ecNumber>3.2.1.55</ecNumber>
    </recommendedName>
    <alternativeName>
        <fullName>Arabinosidase</fullName>
    </alternativeName>
    <alternativeName>
        <fullName>Arabinoxylan arabinofuranohydrolase</fullName>
    </alternativeName>
</protein>
<dbReference type="EC" id="3.2.1.55"/>
<dbReference type="EMBL" id="AL939125">
    <property type="protein sequence ID" value="CAA16189.1"/>
    <property type="molecule type" value="Genomic_DNA"/>
</dbReference>
<dbReference type="PIR" id="T35697">
    <property type="entry name" value="T35697"/>
</dbReference>
<dbReference type="RefSeq" id="NP_630049.1">
    <property type="nucleotide sequence ID" value="NC_003888.3"/>
</dbReference>
<dbReference type="RefSeq" id="WP_011030541.1">
    <property type="nucleotide sequence ID" value="NZ_VNID01000007.1"/>
</dbReference>
<dbReference type="PDB" id="3WMY">
    <property type="method" value="X-ray"/>
    <property type="resolution" value="1.40 A"/>
    <property type="chains" value="A=38-475"/>
</dbReference>
<dbReference type="PDB" id="3WMZ">
    <property type="method" value="X-ray"/>
    <property type="resolution" value="1.90 A"/>
    <property type="chains" value="A=38-475"/>
</dbReference>
<dbReference type="PDB" id="3WN0">
    <property type="method" value="X-ray"/>
    <property type="resolution" value="1.90 A"/>
    <property type="chains" value="A=38-475"/>
</dbReference>
<dbReference type="PDB" id="3WN1">
    <property type="method" value="X-ray"/>
    <property type="resolution" value="2.00 A"/>
    <property type="chains" value="A=38-475"/>
</dbReference>
<dbReference type="PDB" id="3WN2">
    <property type="method" value="X-ray"/>
    <property type="resolution" value="2.10 A"/>
    <property type="chains" value="A=38-475"/>
</dbReference>
<dbReference type="PDBsum" id="3WMY"/>
<dbReference type="PDBsum" id="3WMZ"/>
<dbReference type="PDBsum" id="3WN0"/>
<dbReference type="PDBsum" id="3WN1"/>
<dbReference type="PDBsum" id="3WN2"/>
<dbReference type="SMR" id="O54161"/>
<dbReference type="STRING" id="100226.gene:17763592"/>
<dbReference type="CAZy" id="CBM13">
    <property type="family name" value="Carbohydrate-Binding Module Family 13"/>
</dbReference>
<dbReference type="CAZy" id="GH62">
    <property type="family name" value="Glycoside Hydrolase Family 62"/>
</dbReference>
<dbReference type="PaxDb" id="100226-SCO5932"/>
<dbReference type="KEGG" id="sco:SCO5932"/>
<dbReference type="PATRIC" id="fig|100226.15.peg.6029"/>
<dbReference type="eggNOG" id="COG3693">
    <property type="taxonomic scope" value="Bacteria"/>
</dbReference>
<dbReference type="HOGENOM" id="CLU_041805_2_0_11"/>
<dbReference type="InParanoid" id="O54161"/>
<dbReference type="OrthoDB" id="3317993at2"/>
<dbReference type="PhylomeDB" id="O54161"/>
<dbReference type="BRENDA" id="3.2.1.55">
    <property type="organism ID" value="5998"/>
</dbReference>
<dbReference type="UniPathway" id="UPA00114"/>
<dbReference type="EvolutionaryTrace" id="O54161"/>
<dbReference type="Proteomes" id="UP000001973">
    <property type="component" value="Chromosome"/>
</dbReference>
<dbReference type="GO" id="GO:0005576">
    <property type="term" value="C:extracellular region"/>
    <property type="evidence" value="ECO:0007669"/>
    <property type="project" value="UniProtKB-SubCell"/>
</dbReference>
<dbReference type="GO" id="GO:0046556">
    <property type="term" value="F:alpha-L-arabinofuranosidase activity"/>
    <property type="evidence" value="ECO:0007669"/>
    <property type="project" value="UniProtKB-EC"/>
</dbReference>
<dbReference type="GO" id="GO:0030246">
    <property type="term" value="F:carbohydrate binding"/>
    <property type="evidence" value="ECO:0007669"/>
    <property type="project" value="UniProtKB-KW"/>
</dbReference>
<dbReference type="GO" id="GO:0046373">
    <property type="term" value="P:L-arabinose metabolic process"/>
    <property type="evidence" value="ECO:0007669"/>
    <property type="project" value="InterPro"/>
</dbReference>
<dbReference type="GO" id="GO:0045493">
    <property type="term" value="P:xylan catabolic process"/>
    <property type="evidence" value="ECO:0007669"/>
    <property type="project" value="UniProtKB-UniPathway"/>
</dbReference>
<dbReference type="CDD" id="cd23418">
    <property type="entry name" value="beta-trefoil_Ricin_XLN-like"/>
    <property type="match status" value="1"/>
</dbReference>
<dbReference type="CDD" id="cd08987">
    <property type="entry name" value="GH62"/>
    <property type="match status" value="1"/>
</dbReference>
<dbReference type="Gene3D" id="2.80.10.50">
    <property type="match status" value="1"/>
</dbReference>
<dbReference type="Gene3D" id="2.115.10.20">
    <property type="entry name" value="Glycosyl hydrolase domain, family 43"/>
    <property type="match status" value="1"/>
</dbReference>
<dbReference type="InterPro" id="IPR005193">
    <property type="entry name" value="GH62_arabinosidase"/>
</dbReference>
<dbReference type="InterPro" id="IPR023296">
    <property type="entry name" value="Glyco_hydro_beta-prop_sf"/>
</dbReference>
<dbReference type="InterPro" id="IPR035992">
    <property type="entry name" value="Ricin_B-like_lectins"/>
</dbReference>
<dbReference type="InterPro" id="IPR000772">
    <property type="entry name" value="Ricin_B_lectin"/>
</dbReference>
<dbReference type="PANTHER" id="PTHR40631">
    <property type="entry name" value="ALPHA-L-ARABINOFURANOSIDASE AXHA-2-RELATED"/>
    <property type="match status" value="1"/>
</dbReference>
<dbReference type="PANTHER" id="PTHR40631:SF1">
    <property type="entry name" value="ALPHA-L-ARABINOFURANOSIDASE AXHA-2-RELATED"/>
    <property type="match status" value="1"/>
</dbReference>
<dbReference type="Pfam" id="PF03664">
    <property type="entry name" value="Glyco_hydro_62"/>
    <property type="match status" value="1"/>
</dbReference>
<dbReference type="Pfam" id="PF00652">
    <property type="entry name" value="Ricin_B_lectin"/>
    <property type="match status" value="1"/>
</dbReference>
<dbReference type="SMART" id="SM00458">
    <property type="entry name" value="RICIN"/>
    <property type="match status" value="1"/>
</dbReference>
<dbReference type="SUPFAM" id="SSF75005">
    <property type="entry name" value="Arabinanase/levansucrase/invertase"/>
    <property type="match status" value="1"/>
</dbReference>
<dbReference type="SUPFAM" id="SSF50370">
    <property type="entry name" value="Ricin B-like lectins"/>
    <property type="match status" value="1"/>
</dbReference>
<dbReference type="PROSITE" id="PS50231">
    <property type="entry name" value="RICIN_B_LECTIN"/>
    <property type="match status" value="1"/>
</dbReference>
<keyword id="KW-0002">3D-structure</keyword>
<keyword id="KW-0119">Carbohydrate metabolism</keyword>
<keyword id="KW-0326">Glycosidase</keyword>
<keyword id="KW-0378">Hydrolase</keyword>
<keyword id="KW-0430">Lectin</keyword>
<keyword id="KW-0624">Polysaccharide degradation</keyword>
<keyword id="KW-1185">Reference proteome</keyword>
<keyword id="KW-0964">Secreted</keyword>
<keyword id="KW-0732">Signal</keyword>
<keyword id="KW-0858">Xylan degradation</keyword>
<comment type="function">
    <text evidence="1">Involved in the degradation of xylan and is a key enzyme in the complete degradation of the plant cell wall. It has a specific arabinofuranose-debranching activity on xylan from gramineae. Acts synergistically with the xylanases and binds specifically to xylan. From small arabinoxylo-oligosides (ranging from arabinoxylotriose to arabinoxylohexaose), it liberates arabinose and, after prolonged incubation, the purified enzyme exhibits some xylanolytic activity as well (By similarity).</text>
</comment>
<comment type="catalytic activity">
    <reaction>
        <text>Hydrolysis of terminal non-reducing alpha-L-arabinofuranoside residues in alpha-L-arabinosides.</text>
        <dbReference type="EC" id="3.2.1.55"/>
    </reaction>
</comment>
<comment type="pathway">
    <text>Glycan degradation; xylan degradation.</text>
</comment>
<comment type="subcellular location">
    <subcellularLocation>
        <location evidence="1">Secreted</location>
    </subcellularLocation>
</comment>
<comment type="similarity">
    <text evidence="4">Belongs to the glycosyl hydr olase 62 family.</text>
</comment>